<accession>D5MTF8</accession>
<name>HGL1D_WHEAT</name>
<proteinExistence type="evidence at protein level"/>
<sequence length="564" mass="63747">MALLAAATLNPTTHLSLRSRAGRNSENLWLRSAASSQKSKGRFCNLTVRAGTPSKPAEPIGPVFTKLKPWQIPKRDWFDKDFLFGASTSAYQIEGAWNEDGKGPSTWDHFCHKYPERISDGTNGDVAADSYHLYEEDVKALKDMGMKVYRFSISWSRILPNGTGEVNQAGIDYYNKLINSLISHDIVPYVTIWHWDTPQALEDKYGGFLDPQIVDDYKQFAKLCFESFGDRVKNWFTFNEPHTYCCFSYGEGIHAPGRCSPGMDCAVPEGDSLREPYTAGHHILLAHAEAVEMFRTHYNMHGDSKIGMAFDVMGYEPYQDSFLDDQARERSIDYNLGWFLEPVVRGDYPFSMRSLIGDRLPVFTKEEQEKLASSCDIMGLNYYTSRFSKHVDISPDVTPKLNTDDAYASSETTGSDGNDIGPITGTYWIYMYPKGLTDLLLIMKEKYGNPPIFITENGIADVDGDETMPDPLDDWKRLDYLQRHISAVKDAIDQGADVRGHFTWGLIDNFEWGSGYSSRFGLVYIDKNDGFKRKLKKSAKWFSKFNAVPKHLLGTTKPTGQAPV</sequence>
<evidence type="ECO:0000250" key="1"/>
<evidence type="ECO:0000250" key="2">
    <source>
        <dbReference type="UniProtKB" id="Q1XH05"/>
    </source>
</evidence>
<evidence type="ECO:0000250" key="3">
    <source>
        <dbReference type="UniProtKB" id="Q7XSK0"/>
    </source>
</evidence>
<evidence type="ECO:0000250" key="4">
    <source>
        <dbReference type="UniProtKB" id="Q9SPP9"/>
    </source>
</evidence>
<evidence type="ECO:0000255" key="5">
    <source>
        <dbReference type="PROSITE-ProRule" id="PRU10055"/>
    </source>
</evidence>
<evidence type="ECO:0000269" key="6">
    <source>
    </source>
</evidence>
<evidence type="ECO:0000269" key="7">
    <source>
    </source>
</evidence>
<evidence type="ECO:0000305" key="8"/>
<reference key="1">
    <citation type="journal article" date="2011" name="Plant Physiol.">
        <title>Dispersed benzoxazinone gene cluster: molecular characterization and chromosomal localization of glucosyltransferase and glucosidase genes in wheat and rye.</title>
        <authorList>
            <person name="Sue M."/>
            <person name="Nakamura C."/>
            <person name="Nomura T."/>
        </authorList>
    </citation>
    <scope>NUCLEOTIDE SEQUENCE [MRNA]</scope>
    <scope>FUNCTION</scope>
    <scope>CATALYTIC ACTIVITY</scope>
    <scope>BIOPHYSICOCHEMICAL PROPERTIES</scope>
    <source>
        <strain>cv. Chinese Spring</strain>
    </source>
</reference>
<reference key="2">
    <citation type="journal article" date="2000" name="Planta">
        <title>Purification and characterization of a hydroxamic acid glucoside beta-glucosidase from wheat (Triticum aestivum L.) seedlings.</title>
        <authorList>
            <person name="Sue M."/>
            <person name="Ishihara A."/>
            <person name="Iwamura H."/>
        </authorList>
    </citation>
    <scope>PROTEIN SEQUENCE OF 51-62</scope>
    <scope>FUNCTION</scope>
    <scope>CATALYTIC ACTIVITY</scope>
    <scope>BIOPHYSICOCHEMICAL PROPERTIES</scope>
    <scope>TISSUE SPECIFICITY</scope>
    <scope>SUBUNIT</scope>
    <source>
        <strain>cv. Asakazekomugi</strain>
    </source>
</reference>
<comment type="function">
    <text evidence="6 7">Acts in defense of young plant parts against pests via the production of hydroxamic acids from hydroxamic acid glucosides. Enzymatic activity is highly correlated with plant growth. The preferred substrate is DIMBOA-beta-D-glucoside.</text>
</comment>
<comment type="catalytic activity">
    <reaction evidence="6 7">
        <text>Hydrolysis of terminal, non-reducing beta-D-glucosyl residues with release of beta-D-glucose.</text>
        <dbReference type="EC" id="3.2.1.21"/>
    </reaction>
</comment>
<comment type="catalytic activity">
    <reaction evidence="6 7">
        <text>DIMBOA beta-D-glucoside + H2O = DIMBOA + D-glucose</text>
        <dbReference type="Rhea" id="RHEA:33975"/>
        <dbReference type="ChEBI" id="CHEBI:4167"/>
        <dbReference type="ChEBI" id="CHEBI:15377"/>
        <dbReference type="ChEBI" id="CHEBI:18048"/>
        <dbReference type="ChEBI" id="CHEBI:37573"/>
        <dbReference type="EC" id="3.2.1.182"/>
    </reaction>
</comment>
<comment type="catalytic activity">
    <reaction evidence="6 7">
        <text>DIBOA beta-D-glucoside + H2O = DIBOA + D-glucose</text>
        <dbReference type="Rhea" id="RHEA:33979"/>
        <dbReference type="ChEBI" id="CHEBI:4167"/>
        <dbReference type="ChEBI" id="CHEBI:15377"/>
        <dbReference type="ChEBI" id="CHEBI:63558"/>
        <dbReference type="ChEBI" id="CHEBI:63670"/>
        <dbReference type="EC" id="3.2.1.182"/>
    </reaction>
</comment>
<comment type="biophysicochemical properties">
    <kinetics>
        <KM evidence="6 7">1.34 mM for DIBOA-beta-D-glucoside (with native hexamer)</KM>
        <KM evidence="6 7">1.83 mM for DIBOA-beta-D-glucoside (with recombinant enzyme)</KM>
        <KM evidence="6 7">0.272 mM for DIMBOA-beta-D-glucoside (with native hexamer)</KM>
        <KM evidence="6 7">0.79 mM for DIMBOA-beta-D-glucoside (with recombinant enzyme)</KM>
        <KM evidence="6 7">2.02 mM for HBOA-beta-D-glucoside (with native hexamer)</KM>
        <KM evidence="6 7">0.32 mM for HMBOA-beta-D-glucoside (with native hexamer)</KM>
        <KM evidence="6 7">1.7 mM for p-nitrophenyl beta-D-glucopyranoside (with native hexamer)</KM>
        <KM evidence="6 7">1.78 mM for p-nitrophenyl beta-D-galactopyranoside (with native hexamer)</KM>
        <KM evidence="6 7">3.11 mM for p-nitrophenyl beta-D-xyloside (with native hexamer)</KM>
        <KM evidence="6 7">0.67 mM for p-nitrophenyl beta-D-fucoside (with native hexamer)</KM>
        <KM evidence="6 7">0.24 mM for esculin (with native hexamer)</KM>
        <Vmax evidence="6 7">1060.0 nmol/sec/mg enzyme with DIBOA-beta-D-glucoside as substrate (with native hexamer)</Vmax>
        <Vmax evidence="6 7">4100.0 nmol/sec/mg enzyme with DIMBOA-beta-D-glucoside as substrate (with native hexamer)</Vmax>
        <Vmax evidence="6 7">220.0 nmol/sec/mg enzyme with HBOA-beta-D-glucoside as substrate (with native hexamer)</Vmax>
        <Vmax evidence="6 7">540.0 nmol/sec/mg enzyme with HMBOA-beta-D-glucoside as substrate (with native hexamer)</Vmax>
        <Vmax evidence="6 7">520.0 nmol/sec/mg enzyme with p-nitrophenyl beta-D-glucopyranoside as substrate (with native hexamer)</Vmax>
        <Vmax evidence="6 7">47.0 nmol/sec/mg enzyme with p-nitrophenyl beta-D-galactopyranoside as substrate (with native hexamer)</Vmax>
        <Vmax evidence="6 7">35.0 nmol/sec/mg enzyme with p-nitrophenyl beta-D-xyloside as substrate (with native hexamer)</Vmax>
        <Vmax evidence="6 7">1080.0 nmol/sec/mg enzyme with p-nitrophenyl beta-D-fucoside as substrate (with native hexamer)</Vmax>
        <Vmax evidence="6 7">320.0 nmol/sec/mg enzyme with esculin as substrate (with native hexamer)</Vmax>
        <text>kcat is 5728 sec(-1) with DIBOA-beta-D-glucoside as substrate (with recombinant enzyme). kcat is 330 sec(-1) with DIMBOA-beta-D-glucoside as substrate (with recombinant enzyme).</text>
    </kinetics>
    <phDependence>
        <text evidence="6 7">Optimum pH is 5.5.</text>
    </phDependence>
</comment>
<comment type="subunit">
    <text evidence="6">Homo- and heterohexamers.</text>
</comment>
<comment type="subcellular location">
    <subcellularLocation>
        <location evidence="8">Plastid</location>
        <location evidence="8">Chloroplast</location>
    </subcellularLocation>
</comment>
<comment type="tissue specificity">
    <text evidence="6">Expressed in young seedlings early after germination.</text>
</comment>
<comment type="miscellaneous">
    <text>Wheat is a hexaploid with three different genomes that contains at least four genes coding for GLU1: GLU1A (AC Q1XIR9), GLU1B (AC Q1XH05), GLU1C (AC Q1XH04) and GLU1D (AC D5MTF8). The monomers can aggregate in diverse combinations, reflecting the several isozymes found in the native enzyme described in PubMed:10750901.</text>
</comment>
<comment type="similarity">
    <text evidence="8">Belongs to the glycosyl hydrolase 1 family.</text>
</comment>
<gene>
    <name type="primary">GLU1D</name>
</gene>
<organism>
    <name type="scientific">Triticum aestivum</name>
    <name type="common">Wheat</name>
    <dbReference type="NCBI Taxonomy" id="4565"/>
    <lineage>
        <taxon>Eukaryota</taxon>
        <taxon>Viridiplantae</taxon>
        <taxon>Streptophyta</taxon>
        <taxon>Embryophyta</taxon>
        <taxon>Tracheophyta</taxon>
        <taxon>Spermatophyta</taxon>
        <taxon>Magnoliopsida</taxon>
        <taxon>Liliopsida</taxon>
        <taxon>Poales</taxon>
        <taxon>Poaceae</taxon>
        <taxon>BOP clade</taxon>
        <taxon>Pooideae</taxon>
        <taxon>Triticodae</taxon>
        <taxon>Triticeae</taxon>
        <taxon>Triticinae</taxon>
        <taxon>Triticum</taxon>
    </lineage>
</organism>
<feature type="transit peptide" description="Chloroplast" evidence="1">
    <location>
        <begin position="1"/>
        <end position="50"/>
    </location>
</feature>
<feature type="chain" id="PRO_0000424100" description="4-hydroxy-7-methoxy-3-oxo-3,4-dihydro-2H-1,4-benzoxazin-2-yl glucoside beta-D-glucosidase 1d, chloroplastic">
    <location>
        <begin position="51"/>
        <end position="564"/>
    </location>
</feature>
<feature type="active site" description="Proton donor" evidence="3">
    <location>
        <position position="240"/>
    </location>
</feature>
<feature type="active site" description="Nucleophile" evidence="5">
    <location>
        <position position="456"/>
    </location>
</feature>
<feature type="binding site" evidence="3">
    <location>
        <position position="92"/>
    </location>
    <ligand>
        <name>a beta-D-glucoside</name>
        <dbReference type="ChEBI" id="CHEBI:22798"/>
    </ligand>
</feature>
<feature type="binding site" evidence="3">
    <location>
        <position position="194"/>
    </location>
    <ligand>
        <name>a beta-D-glucoside</name>
        <dbReference type="ChEBI" id="CHEBI:22798"/>
    </ligand>
</feature>
<feature type="binding site" evidence="3">
    <location>
        <begin position="239"/>
        <end position="240"/>
    </location>
    <ligand>
        <name>a beta-D-glucoside</name>
        <dbReference type="ChEBI" id="CHEBI:22798"/>
    </ligand>
</feature>
<feature type="binding site" evidence="3">
    <location>
        <position position="383"/>
    </location>
    <ligand>
        <name>a beta-D-glucoside</name>
        <dbReference type="ChEBI" id="CHEBI:22798"/>
    </ligand>
</feature>
<feature type="binding site" evidence="4">
    <location>
        <position position="456"/>
    </location>
    <ligand>
        <name>a beta-D-glucoside</name>
        <dbReference type="ChEBI" id="CHEBI:22798"/>
    </ligand>
</feature>
<feature type="binding site" evidence="3">
    <location>
        <position position="504"/>
    </location>
    <ligand>
        <name>a beta-D-glucoside</name>
        <dbReference type="ChEBI" id="CHEBI:22798"/>
    </ligand>
</feature>
<feature type="binding site" evidence="3">
    <location>
        <begin position="511"/>
        <end position="512"/>
    </location>
    <ligand>
        <name>a beta-D-glucoside</name>
        <dbReference type="ChEBI" id="CHEBI:22798"/>
    </ligand>
</feature>
<feature type="binding site" evidence="2">
    <location>
        <position position="520"/>
    </location>
    <ligand>
        <name>a beta-D-glucoside</name>
        <dbReference type="ChEBI" id="CHEBI:22798"/>
    </ligand>
</feature>
<feature type="disulfide bond" evidence="3">
    <location>
        <begin position="259"/>
        <end position="265"/>
    </location>
</feature>
<protein>
    <recommendedName>
        <fullName>4-hydroxy-7-methoxy-3-oxo-3,4-dihydro-2H-1,4-benzoxazin-2-yl glucoside beta-D-glucosidase 1d, chloroplastic</fullName>
        <ecNumber evidence="6 7">3.2.1.182</ecNumber>
    </recommendedName>
    <alternativeName>
        <fullName>Beta-glucosidase 1d</fullName>
        <shortName>TaGlu1d</shortName>
        <ecNumber evidence="6 7">3.2.1.21</ecNumber>
    </alternativeName>
</protein>
<keyword id="KW-0150">Chloroplast</keyword>
<keyword id="KW-0903">Direct protein sequencing</keyword>
<keyword id="KW-1015">Disulfide bond</keyword>
<keyword id="KW-0326">Glycosidase</keyword>
<keyword id="KW-0378">Hydrolase</keyword>
<keyword id="KW-0934">Plastid</keyword>
<keyword id="KW-1185">Reference proteome</keyword>
<keyword id="KW-0809">Transit peptide</keyword>
<dbReference type="EC" id="3.2.1.182" evidence="6 7"/>
<dbReference type="EC" id="3.2.1.21" evidence="6 7"/>
<dbReference type="EMBL" id="AB548284">
    <property type="protein sequence ID" value="BAJ07108.1"/>
    <property type="molecule type" value="mRNA"/>
</dbReference>
<dbReference type="SMR" id="D5MTF8"/>
<dbReference type="STRING" id="4565.D5MTF8"/>
<dbReference type="PaxDb" id="4565-Traes_2AL_AEB11A672.1"/>
<dbReference type="EnsemblPlants" id="TraesCSU02G036600.1">
    <property type="protein sequence ID" value="TraesCSU02G036600.1"/>
    <property type="gene ID" value="TraesCSU02G036600"/>
</dbReference>
<dbReference type="EnsemblPlants" id="TraesLAC2D03G01249260.1">
    <property type="protein sequence ID" value="TraesLAC2D03G01249260.1"/>
    <property type="gene ID" value="TraesLAC2D03G01249260"/>
</dbReference>
<dbReference type="EnsemblPlants" id="TraesNOR2A03G00817620.1">
    <property type="protein sequence ID" value="TraesNOR2A03G00817620.1"/>
    <property type="gene ID" value="TraesNOR2A03G00817620"/>
</dbReference>
<dbReference type="EnsemblPlants" id="TraesWEE_scaffold_048529_01G000100.1">
    <property type="protein sequence ID" value="TraesWEE_scaffold_048529_01G000100.1"/>
    <property type="gene ID" value="TraesWEE_scaffold_048529_01G000100"/>
</dbReference>
<dbReference type="Gramene" id="TraesCSU02G036600.1">
    <property type="protein sequence ID" value="TraesCSU02G036600.1"/>
    <property type="gene ID" value="TraesCSU02G036600"/>
</dbReference>
<dbReference type="Gramene" id="TraesLAC2D03G01249260.1">
    <property type="protein sequence ID" value="TraesLAC2D03G01249260.1"/>
    <property type="gene ID" value="TraesLAC2D03G01249260"/>
</dbReference>
<dbReference type="Gramene" id="TraesNOR2A03G00817620.1">
    <property type="protein sequence ID" value="TraesNOR2A03G00817620.1"/>
    <property type="gene ID" value="TraesNOR2A03G00817620"/>
</dbReference>
<dbReference type="Gramene" id="TraesWEE_scaffold_048529_01G000100.1">
    <property type="protein sequence ID" value="TraesWEE_scaffold_048529_01G000100.1"/>
    <property type="gene ID" value="TraesWEE_scaffold_048529_01G000100"/>
</dbReference>
<dbReference type="eggNOG" id="KOG0626">
    <property type="taxonomic scope" value="Eukaryota"/>
</dbReference>
<dbReference type="HOGENOM" id="CLU_001859_1_0_1"/>
<dbReference type="OMA" id="CHEYPER"/>
<dbReference type="OrthoDB" id="774279at2759"/>
<dbReference type="SABIO-RK" id="D5MTF8"/>
<dbReference type="Proteomes" id="UP000019116">
    <property type="component" value="Chromosome Un"/>
</dbReference>
<dbReference type="ExpressionAtlas" id="D5MTF8">
    <property type="expression patterns" value="baseline"/>
</dbReference>
<dbReference type="GO" id="GO:0009507">
    <property type="term" value="C:chloroplast"/>
    <property type="evidence" value="ECO:0007669"/>
    <property type="project" value="UniProtKB-SubCell"/>
</dbReference>
<dbReference type="GO" id="GO:0008422">
    <property type="term" value="F:beta-glucosidase activity"/>
    <property type="evidence" value="ECO:0000318"/>
    <property type="project" value="GO_Central"/>
</dbReference>
<dbReference type="GO" id="GO:0102726">
    <property type="term" value="F:DIMBOA glucoside beta-D-glucosidase activity"/>
    <property type="evidence" value="ECO:0007669"/>
    <property type="project" value="UniProtKB-EC"/>
</dbReference>
<dbReference type="GO" id="GO:0005975">
    <property type="term" value="P:carbohydrate metabolic process"/>
    <property type="evidence" value="ECO:0007669"/>
    <property type="project" value="InterPro"/>
</dbReference>
<dbReference type="FunFam" id="3.20.20.80:FF:000041">
    <property type="entry name" value="Beta-glucosidase 7"/>
    <property type="match status" value="1"/>
</dbReference>
<dbReference type="Gene3D" id="3.20.20.80">
    <property type="entry name" value="Glycosidases"/>
    <property type="match status" value="1"/>
</dbReference>
<dbReference type="InterPro" id="IPR001360">
    <property type="entry name" value="Glyco_hydro_1"/>
</dbReference>
<dbReference type="InterPro" id="IPR018120">
    <property type="entry name" value="Glyco_hydro_1_AS"/>
</dbReference>
<dbReference type="InterPro" id="IPR033132">
    <property type="entry name" value="Glyco_hydro_1_N_CS"/>
</dbReference>
<dbReference type="InterPro" id="IPR017853">
    <property type="entry name" value="Glycoside_hydrolase_SF"/>
</dbReference>
<dbReference type="PANTHER" id="PTHR10353:SF326">
    <property type="entry name" value="4-HYDROXY-7-METHOXY-3-OXO-3,4-DIHYDRO-2H-1,4-BENZOXAZIN-2-YL GLUCOSIDE BETA-D-GLUCOSIDASE 1, CHLOROPLASTIC"/>
    <property type="match status" value="1"/>
</dbReference>
<dbReference type="PANTHER" id="PTHR10353">
    <property type="entry name" value="GLYCOSYL HYDROLASE"/>
    <property type="match status" value="1"/>
</dbReference>
<dbReference type="Pfam" id="PF00232">
    <property type="entry name" value="Glyco_hydro_1"/>
    <property type="match status" value="1"/>
</dbReference>
<dbReference type="PRINTS" id="PR00131">
    <property type="entry name" value="GLHYDRLASE1"/>
</dbReference>
<dbReference type="SUPFAM" id="SSF51445">
    <property type="entry name" value="(Trans)glycosidases"/>
    <property type="match status" value="1"/>
</dbReference>
<dbReference type="PROSITE" id="PS00572">
    <property type="entry name" value="GLYCOSYL_HYDROL_F1_1"/>
    <property type="match status" value="1"/>
</dbReference>
<dbReference type="PROSITE" id="PS00653">
    <property type="entry name" value="GLYCOSYL_HYDROL_F1_2"/>
    <property type="match status" value="1"/>
</dbReference>